<dbReference type="EMBL" id="U11583">
    <property type="protein sequence ID" value="AAB65058.1"/>
    <property type="molecule type" value="Genomic_DNA"/>
</dbReference>
<dbReference type="EMBL" id="AY692604">
    <property type="protein sequence ID" value="AAT92623.1"/>
    <property type="molecule type" value="Genomic_DNA"/>
</dbReference>
<dbReference type="EMBL" id="BK006934">
    <property type="protein sequence ID" value="DAA06642.1"/>
    <property type="molecule type" value="Genomic_DNA"/>
</dbReference>
<dbReference type="PIR" id="S48922">
    <property type="entry name" value="S48922"/>
</dbReference>
<dbReference type="RefSeq" id="NP_011817.1">
    <property type="nucleotide sequence ID" value="NM_001179126.1"/>
</dbReference>
<dbReference type="BioGRID" id="36379">
    <property type="interactions" value="42"/>
</dbReference>
<dbReference type="DIP" id="DIP-1875N"/>
<dbReference type="FunCoup" id="P38725">
    <property type="interactions" value="33"/>
</dbReference>
<dbReference type="IntAct" id="P38725">
    <property type="interactions" value="1"/>
</dbReference>
<dbReference type="MINT" id="P38725"/>
<dbReference type="STRING" id="4932.YHL046C"/>
<dbReference type="PaxDb" id="4932-YHL046C"/>
<dbReference type="EnsemblFungi" id="YHL046C_mRNA">
    <property type="protein sequence ID" value="YHL046C"/>
    <property type="gene ID" value="YHL046C"/>
</dbReference>
<dbReference type="GeneID" id="856339"/>
<dbReference type="KEGG" id="sce:YHL046C"/>
<dbReference type="AGR" id="SGD:S000001038"/>
<dbReference type="SGD" id="S000001038">
    <property type="gene designation" value="PAU13"/>
</dbReference>
<dbReference type="VEuPathDB" id="FungiDB:YHL046C"/>
<dbReference type="eggNOG" id="ENOG502SR1B">
    <property type="taxonomic scope" value="Eukaryota"/>
</dbReference>
<dbReference type="GeneTree" id="ENSGT00940000176276"/>
<dbReference type="HOGENOM" id="CLU_136376_0_0_1"/>
<dbReference type="InParanoid" id="P38725"/>
<dbReference type="OrthoDB" id="4059055at2759"/>
<dbReference type="BioCyc" id="YEAST:G3O-31062-MONOMER"/>
<dbReference type="PRO" id="PR:P38725"/>
<dbReference type="Proteomes" id="UP000002311">
    <property type="component" value="Chromosome VIII"/>
</dbReference>
<dbReference type="RNAct" id="P38725">
    <property type="molecule type" value="protein"/>
</dbReference>
<dbReference type="GO" id="GO:0009277">
    <property type="term" value="C:fungal-type cell wall"/>
    <property type="evidence" value="ECO:0000318"/>
    <property type="project" value="GO_Central"/>
</dbReference>
<dbReference type="GO" id="GO:0005199">
    <property type="term" value="F:structural constituent of cell wall"/>
    <property type="evidence" value="ECO:0000318"/>
    <property type="project" value="GO_Central"/>
</dbReference>
<dbReference type="GO" id="GO:0031505">
    <property type="term" value="P:fungal-type cell wall organization"/>
    <property type="evidence" value="ECO:0000318"/>
    <property type="project" value="GO_Central"/>
</dbReference>
<dbReference type="InterPro" id="IPR000992">
    <property type="entry name" value="SRP1_TIP1"/>
</dbReference>
<dbReference type="InterPro" id="IPR050788">
    <property type="entry name" value="Yeast_SRP1/TIP1_CWP"/>
</dbReference>
<dbReference type="PANTHER" id="PTHR31002:SF34">
    <property type="entry name" value="CELL WALL PROTEIN CWP1-RELATED"/>
    <property type="match status" value="1"/>
</dbReference>
<dbReference type="PANTHER" id="PTHR31002">
    <property type="entry name" value="SERIPAUPERIN"/>
    <property type="match status" value="1"/>
</dbReference>
<dbReference type="Pfam" id="PF00660">
    <property type="entry name" value="SRP1_TIP1"/>
    <property type="match status" value="1"/>
</dbReference>
<dbReference type="PROSITE" id="PS00724">
    <property type="entry name" value="SRP1_TIP1"/>
    <property type="match status" value="1"/>
</dbReference>
<keyword id="KW-1185">Reference proteome</keyword>
<keyword id="KW-0732">Signal</keyword>
<protein>
    <recommendedName>
        <fullName>Seripauperin-13</fullName>
    </recommendedName>
</protein>
<sequence>MVKLTSIAAGVAAIAATASATTTLAQSDERVNLVELGVYVSDIRAHLAQYYMFQAAHPTETYPVEVAEAVFNYGDFTTMLTGIAPDQVTRMITGVPWYSSRLKPAISSALSKDGIYTITN</sequence>
<feature type="signal peptide" evidence="1">
    <location>
        <begin position="1"/>
        <end position="25"/>
    </location>
</feature>
<feature type="chain" id="PRO_0000033245" description="Seripauperin-13">
    <location>
        <begin position="26"/>
        <end position="120"/>
    </location>
</feature>
<name>PAU13_YEAST</name>
<reference key="1">
    <citation type="journal article" date="1994" name="Science">
        <title>Complete nucleotide sequence of Saccharomyces cerevisiae chromosome VIII.</title>
        <authorList>
            <person name="Johnston M."/>
            <person name="Andrews S."/>
            <person name="Brinkman R."/>
            <person name="Cooper J."/>
            <person name="Ding H."/>
            <person name="Dover J."/>
            <person name="Du Z."/>
            <person name="Favello A."/>
            <person name="Fulton L."/>
            <person name="Gattung S."/>
            <person name="Geisel C."/>
            <person name="Kirsten J."/>
            <person name="Kucaba T."/>
            <person name="Hillier L.W."/>
            <person name="Jier M."/>
            <person name="Johnston L."/>
            <person name="Langston Y."/>
            <person name="Latreille P."/>
            <person name="Louis E.J."/>
            <person name="Macri C."/>
            <person name="Mardis E."/>
            <person name="Menezes S."/>
            <person name="Mouser L."/>
            <person name="Nhan M."/>
            <person name="Rifkin L."/>
            <person name="Riles L."/>
            <person name="St Peter H."/>
            <person name="Trevaskis E."/>
            <person name="Vaughan K."/>
            <person name="Vignati D."/>
            <person name="Wilcox L."/>
            <person name="Wohldman P."/>
            <person name="Waterston R."/>
            <person name="Wilson R."/>
            <person name="Vaudin M."/>
        </authorList>
    </citation>
    <scope>NUCLEOTIDE SEQUENCE [LARGE SCALE GENOMIC DNA]</scope>
    <source>
        <strain>ATCC 204508 / S288c</strain>
    </source>
</reference>
<reference key="2">
    <citation type="journal article" date="2014" name="G3 (Bethesda)">
        <title>The reference genome sequence of Saccharomyces cerevisiae: Then and now.</title>
        <authorList>
            <person name="Engel S.R."/>
            <person name="Dietrich F.S."/>
            <person name="Fisk D.G."/>
            <person name="Binkley G."/>
            <person name="Balakrishnan R."/>
            <person name="Costanzo M.C."/>
            <person name="Dwight S.S."/>
            <person name="Hitz B.C."/>
            <person name="Karra K."/>
            <person name="Nash R.S."/>
            <person name="Weng S."/>
            <person name="Wong E.D."/>
            <person name="Lloyd P."/>
            <person name="Skrzypek M.S."/>
            <person name="Miyasato S.R."/>
            <person name="Simison M."/>
            <person name="Cherry J.M."/>
        </authorList>
    </citation>
    <scope>GENOME REANNOTATION</scope>
    <source>
        <strain>ATCC 204508 / S288c</strain>
    </source>
</reference>
<reference key="3">
    <citation type="journal article" date="2007" name="Genome Res.">
        <title>Approaching a complete repository of sequence-verified protein-encoding clones for Saccharomyces cerevisiae.</title>
        <authorList>
            <person name="Hu Y."/>
            <person name="Rolfs A."/>
            <person name="Bhullar B."/>
            <person name="Murthy T.V.S."/>
            <person name="Zhu C."/>
            <person name="Berger M.F."/>
            <person name="Camargo A.A."/>
            <person name="Kelley F."/>
            <person name="McCarron S."/>
            <person name="Jepson D."/>
            <person name="Richardson A."/>
            <person name="Raphael J."/>
            <person name="Moreira D."/>
            <person name="Taycher E."/>
            <person name="Zuo D."/>
            <person name="Mohr S."/>
            <person name="Kane M.F."/>
            <person name="Williamson J."/>
            <person name="Simpson A.J.G."/>
            <person name="Bulyk M.L."/>
            <person name="Harlow E."/>
            <person name="Marsischky G."/>
            <person name="Kolodner R.D."/>
            <person name="LaBaer J."/>
        </authorList>
    </citation>
    <scope>NUCLEOTIDE SEQUENCE [GENOMIC DNA]</scope>
    <source>
        <strain>ATCC 204508 / S288c</strain>
    </source>
</reference>
<evidence type="ECO:0000255" key="1"/>
<evidence type="ECO:0000305" key="2"/>
<gene>
    <name type="primary">PAU13</name>
    <name type="ordered locus">YHL046C</name>
</gene>
<comment type="similarity">
    <text evidence="2">Belongs to the SRP1/TIP1 family. Seripauperin subfamily.</text>
</comment>
<organism>
    <name type="scientific">Saccharomyces cerevisiae (strain ATCC 204508 / S288c)</name>
    <name type="common">Baker's yeast</name>
    <dbReference type="NCBI Taxonomy" id="559292"/>
    <lineage>
        <taxon>Eukaryota</taxon>
        <taxon>Fungi</taxon>
        <taxon>Dikarya</taxon>
        <taxon>Ascomycota</taxon>
        <taxon>Saccharomycotina</taxon>
        <taxon>Saccharomycetes</taxon>
        <taxon>Saccharomycetales</taxon>
        <taxon>Saccharomycetaceae</taxon>
        <taxon>Saccharomyces</taxon>
    </lineage>
</organism>
<proteinExistence type="inferred from homology"/>
<accession>P38725</accession>
<accession>D3DKS5</accession>